<dbReference type="EMBL" id="CH476664">
    <property type="protein sequence ID" value="EDN04571.1"/>
    <property type="molecule type" value="Genomic_DNA"/>
</dbReference>
<dbReference type="SMR" id="A6RF22"/>
<dbReference type="STRING" id="339724.A6RF22"/>
<dbReference type="KEGG" id="aje:HCAG_08237"/>
<dbReference type="VEuPathDB" id="FungiDB:HCAG_08237"/>
<dbReference type="HOGENOM" id="CLU_048802_0_0_1"/>
<dbReference type="OMA" id="ERKEMPW"/>
<dbReference type="OrthoDB" id="10611at299071"/>
<dbReference type="Proteomes" id="UP000009297">
    <property type="component" value="Unassembled WGS sequence"/>
</dbReference>
<dbReference type="GO" id="GO:0030686">
    <property type="term" value="C:90S preribosome"/>
    <property type="evidence" value="ECO:0007669"/>
    <property type="project" value="TreeGrafter"/>
</dbReference>
<dbReference type="GO" id="GO:0005730">
    <property type="term" value="C:nucleolus"/>
    <property type="evidence" value="ECO:0007669"/>
    <property type="project" value="UniProtKB-SubCell"/>
</dbReference>
<dbReference type="GO" id="GO:0000462">
    <property type="term" value="P:maturation of SSU-rRNA from tricistronic rRNA transcript (SSU-rRNA, 5.8S rRNA, LSU-rRNA)"/>
    <property type="evidence" value="ECO:0007669"/>
    <property type="project" value="TreeGrafter"/>
</dbReference>
<dbReference type="InterPro" id="IPR009292">
    <property type="entry name" value="RRP36"/>
</dbReference>
<dbReference type="PANTHER" id="PTHR21738">
    <property type="entry name" value="RIBOSOMAL RNA PROCESSING PROTEIN 36 HOMOLOG"/>
    <property type="match status" value="1"/>
</dbReference>
<dbReference type="PANTHER" id="PTHR21738:SF0">
    <property type="entry name" value="RIBOSOMAL RNA PROCESSING PROTEIN 36 HOMOLOG"/>
    <property type="match status" value="1"/>
</dbReference>
<dbReference type="Pfam" id="PF06102">
    <property type="entry name" value="RRP36"/>
    <property type="match status" value="1"/>
</dbReference>
<protein>
    <recommendedName>
        <fullName>rRNA biogenesis protein RRP36</fullName>
    </recommendedName>
    <alternativeName>
        <fullName>Ribosomal RNA-processing protein 36</fullName>
    </alternativeName>
</protein>
<organism>
    <name type="scientific">Ajellomyces capsulatus (strain NAm1 / WU24)</name>
    <name type="common">Darling's disease fungus</name>
    <name type="synonym">Histoplasma capsulatum</name>
    <dbReference type="NCBI Taxonomy" id="2059318"/>
    <lineage>
        <taxon>Eukaryota</taxon>
        <taxon>Fungi</taxon>
        <taxon>Dikarya</taxon>
        <taxon>Ascomycota</taxon>
        <taxon>Pezizomycotina</taxon>
        <taxon>Eurotiomycetes</taxon>
        <taxon>Eurotiomycetidae</taxon>
        <taxon>Onygenales</taxon>
        <taxon>Ajellomycetaceae</taxon>
        <taxon>Histoplasma</taxon>
    </lineage>
</organism>
<feature type="chain" id="PRO_0000397609" description="rRNA biogenesis protein RRP36">
    <location>
        <begin position="1"/>
        <end position="345"/>
    </location>
</feature>
<feature type="region of interest" description="Disordered" evidence="3">
    <location>
        <begin position="15"/>
        <end position="167"/>
    </location>
</feature>
<feature type="region of interest" description="Disordered" evidence="3">
    <location>
        <begin position="312"/>
        <end position="345"/>
    </location>
</feature>
<feature type="coiled-coil region" evidence="2">
    <location>
        <begin position="219"/>
        <end position="267"/>
    </location>
</feature>
<feature type="compositionally biased region" description="Basic and acidic residues" evidence="3">
    <location>
        <begin position="15"/>
        <end position="25"/>
    </location>
</feature>
<feature type="compositionally biased region" description="Acidic residues" evidence="3">
    <location>
        <begin position="32"/>
        <end position="43"/>
    </location>
</feature>
<feature type="compositionally biased region" description="Polar residues" evidence="3">
    <location>
        <begin position="66"/>
        <end position="76"/>
    </location>
</feature>
<feature type="compositionally biased region" description="Low complexity" evidence="3">
    <location>
        <begin position="78"/>
        <end position="87"/>
    </location>
</feature>
<feature type="compositionally biased region" description="Polar residues" evidence="3">
    <location>
        <begin position="108"/>
        <end position="119"/>
    </location>
</feature>
<feature type="compositionally biased region" description="Basic residues" evidence="3">
    <location>
        <begin position="143"/>
        <end position="153"/>
    </location>
</feature>
<feature type="compositionally biased region" description="Basic and acidic residues" evidence="3">
    <location>
        <begin position="312"/>
        <end position="322"/>
    </location>
</feature>
<feature type="compositionally biased region" description="Basic and acidic residues" evidence="3">
    <location>
        <begin position="330"/>
        <end position="345"/>
    </location>
</feature>
<sequence>MPISSKLNQRVRARLREEDFEHFSDESVSNESLDERESNEDTEQDNRDQRETDDDDTEDDGHTEISDINPSLNTISFGALAKAQAALGKRKRRTTSTTDITPKRTKVLSRQSPTPSTSSNKEHDQGQGLSEFQKHLASNAKKPPQKLTHRTSKHAPTIQSSRHAVSRKRTIIEPLAAPKPRDPRFDSVVLSHSTNGNPSTAANADIHARNNYAFLNHYRTDEIAELRKQVSALQTKKKKTERDDHEIVRLKREITSMSDRQRAFERKEMEREVLVQHRRREKELIREGKKSQPYFLKKGEVKKEVIAKRFTEMSGKEKQRALERRRKKVVGKERKEMPWGRRGVE</sequence>
<evidence type="ECO:0000250" key="1"/>
<evidence type="ECO:0000255" key="2"/>
<evidence type="ECO:0000256" key="3">
    <source>
        <dbReference type="SAM" id="MobiDB-lite"/>
    </source>
</evidence>
<evidence type="ECO:0000305" key="4"/>
<accession>A6RF22</accession>
<comment type="function">
    <text evidence="1">Component of the 90S pre-ribosome involved in the maturation of rRNAs. Required for early cleavages of the pre-RNAs in the 40S ribosomal subunit maturation pathway (By similarity).</text>
</comment>
<comment type="subunit">
    <text evidence="1">Associates with 90S and pre-40S pre-ribosomal particles.</text>
</comment>
<comment type="subcellular location">
    <subcellularLocation>
        <location evidence="1">Nucleus</location>
        <location evidence="1">Nucleolus</location>
    </subcellularLocation>
</comment>
<comment type="similarity">
    <text evidence="4">Belongs to the RRP36 family.</text>
</comment>
<keyword id="KW-0175">Coiled coil</keyword>
<keyword id="KW-0539">Nucleus</keyword>
<keyword id="KW-1185">Reference proteome</keyword>
<keyword id="KW-0687">Ribonucleoprotein</keyword>
<keyword id="KW-0690">Ribosome biogenesis</keyword>
<keyword id="KW-0698">rRNA processing</keyword>
<proteinExistence type="inferred from homology"/>
<gene>
    <name type="primary">RRP36</name>
    <name type="ORF">HCAG_08237</name>
</gene>
<reference key="1">
    <citation type="journal article" date="2009" name="Genome Res.">
        <title>Comparative genomic analyses of the human fungal pathogens Coccidioides and their relatives.</title>
        <authorList>
            <person name="Sharpton T.J."/>
            <person name="Stajich J.E."/>
            <person name="Rounsley S.D."/>
            <person name="Gardner M.J."/>
            <person name="Wortman J.R."/>
            <person name="Jordar V.S."/>
            <person name="Maiti R."/>
            <person name="Kodira C.D."/>
            <person name="Neafsey D.E."/>
            <person name="Zeng Q."/>
            <person name="Hung C.-Y."/>
            <person name="McMahan C."/>
            <person name="Muszewska A."/>
            <person name="Grynberg M."/>
            <person name="Mandel M.A."/>
            <person name="Kellner E.M."/>
            <person name="Barker B.M."/>
            <person name="Galgiani J.N."/>
            <person name="Orbach M.J."/>
            <person name="Kirkland T.N."/>
            <person name="Cole G.T."/>
            <person name="Henn M.R."/>
            <person name="Birren B.W."/>
            <person name="Taylor J.W."/>
        </authorList>
    </citation>
    <scope>NUCLEOTIDE SEQUENCE [LARGE SCALE GENOMIC DNA]</scope>
    <source>
        <strain>NAm1 / WU24</strain>
    </source>
</reference>
<name>RRP36_AJECN</name>